<feature type="chain" id="PRO_1000095126" description="Glutamyl-tRNA(Gln) amidotransferase subunit A">
    <location>
        <begin position="1"/>
        <end position="485"/>
    </location>
</feature>
<feature type="active site" description="Charge relay system" evidence="1">
    <location>
        <position position="79"/>
    </location>
</feature>
<feature type="active site" description="Charge relay system" evidence="1">
    <location>
        <position position="154"/>
    </location>
</feature>
<feature type="active site" description="Acyl-ester intermediate" evidence="1">
    <location>
        <position position="178"/>
    </location>
</feature>
<evidence type="ECO:0000255" key="1">
    <source>
        <dbReference type="HAMAP-Rule" id="MF_00120"/>
    </source>
</evidence>
<proteinExistence type="inferred from homology"/>
<protein>
    <recommendedName>
        <fullName evidence="1">Glutamyl-tRNA(Gln) amidotransferase subunit A</fullName>
        <shortName evidence="1">Glu-ADT subunit A</shortName>
        <ecNumber evidence="1">6.3.5.7</ecNumber>
    </recommendedName>
</protein>
<comment type="function">
    <text evidence="1">Allows the formation of correctly charged Gln-tRNA(Gln) through the transamidation of misacylated Glu-tRNA(Gln) in organisms which lack glutaminyl-tRNA synthetase. The reaction takes place in the presence of glutamine and ATP through an activated gamma-phospho-Glu-tRNA(Gln).</text>
</comment>
<comment type="catalytic activity">
    <reaction evidence="1">
        <text>L-glutamyl-tRNA(Gln) + L-glutamine + ATP + H2O = L-glutaminyl-tRNA(Gln) + L-glutamate + ADP + phosphate + H(+)</text>
        <dbReference type="Rhea" id="RHEA:17521"/>
        <dbReference type="Rhea" id="RHEA-COMP:9681"/>
        <dbReference type="Rhea" id="RHEA-COMP:9684"/>
        <dbReference type="ChEBI" id="CHEBI:15377"/>
        <dbReference type="ChEBI" id="CHEBI:15378"/>
        <dbReference type="ChEBI" id="CHEBI:29985"/>
        <dbReference type="ChEBI" id="CHEBI:30616"/>
        <dbReference type="ChEBI" id="CHEBI:43474"/>
        <dbReference type="ChEBI" id="CHEBI:58359"/>
        <dbReference type="ChEBI" id="CHEBI:78520"/>
        <dbReference type="ChEBI" id="CHEBI:78521"/>
        <dbReference type="ChEBI" id="CHEBI:456216"/>
        <dbReference type="EC" id="6.3.5.7"/>
    </reaction>
</comment>
<comment type="subunit">
    <text evidence="1">Heterotrimer of A, B and C subunits.</text>
</comment>
<comment type="similarity">
    <text evidence="1">Belongs to the amidase family. GatA subfamily.</text>
</comment>
<reference key="1">
    <citation type="journal article" date="2007" name="PLoS ONE">
        <title>Analysis of the neurotoxin complex genes in Clostridium botulinum A1-A4 and B1 strains: BoNT/A3, /Ba4 and /B1 clusters are located within plasmids.</title>
        <authorList>
            <person name="Smith T.J."/>
            <person name="Hill K.K."/>
            <person name="Foley B.T."/>
            <person name="Detter J.C."/>
            <person name="Munk A.C."/>
            <person name="Bruce D.C."/>
            <person name="Doggett N.A."/>
            <person name="Smith L.A."/>
            <person name="Marks J.D."/>
            <person name="Xie G."/>
            <person name="Brettin T.S."/>
        </authorList>
    </citation>
    <scope>NUCLEOTIDE SEQUENCE [LARGE SCALE GENOMIC DNA]</scope>
    <source>
        <strain>Loch Maree / Type A3</strain>
    </source>
</reference>
<keyword id="KW-0067">ATP-binding</keyword>
<keyword id="KW-0436">Ligase</keyword>
<keyword id="KW-0547">Nucleotide-binding</keyword>
<keyword id="KW-0648">Protein biosynthesis</keyword>
<accession>B1L1G9</accession>
<organism>
    <name type="scientific">Clostridium botulinum (strain Loch Maree / Type A3)</name>
    <dbReference type="NCBI Taxonomy" id="498214"/>
    <lineage>
        <taxon>Bacteria</taxon>
        <taxon>Bacillati</taxon>
        <taxon>Bacillota</taxon>
        <taxon>Clostridia</taxon>
        <taxon>Eubacteriales</taxon>
        <taxon>Clostridiaceae</taxon>
        <taxon>Clostridium</taxon>
    </lineage>
</organism>
<sequence>MDLTKLTAHELKDILSNKEVKAEEITRAFLDRINLVDNKLGAYLYVSEEEAIKKAKEIDGKIEKNEELKALSGIPVGIKDNINVKGMQNTCASKILQGYTSPYDAHVTEKIKKEEGIILGKLNMDEFAMGSSTENSAFKLAKNPWDLERVPGGSSGGSAVAVSGCEATLSLGTDTGGSVRQPASFCGIVGLKPTYGRISRSGVVAFGSTLDQVGPMGKDVEDCALLTSAIAGLDKKDFTTADKEVPDYKKSLTKDIKGKKIGIPKEFFGEGLDEKVRKSVEEAIKVLEENGAEVKPCSLPLMDYALSAYYIISSAEASSNLARFDGIRYGYRSKNFKDAKDIYLKSRSEGFGDEVKRRIMLGTYVLSAGYYDAYYKKALKVRKLIKDDFQRVFKDFDAIVSPTSPTTAFKVGEKKDDVMSMYLSDIYTVPISVAGVPAISLPCGMIDGLPVGLQIISDYFKEDVLFNLAYSYEQSVDFYKMRADF</sequence>
<name>GATA_CLOBM</name>
<gene>
    <name evidence="1" type="primary">gatA</name>
    <name type="ordered locus">CLK_2683</name>
</gene>
<dbReference type="EC" id="6.3.5.7" evidence="1"/>
<dbReference type="EMBL" id="CP000962">
    <property type="protein sequence ID" value="ACA53973.1"/>
    <property type="molecule type" value="Genomic_DNA"/>
</dbReference>
<dbReference type="RefSeq" id="WP_012342138.1">
    <property type="nucleotide sequence ID" value="NC_010520.1"/>
</dbReference>
<dbReference type="SMR" id="B1L1G9"/>
<dbReference type="KEGG" id="cbl:CLK_2683"/>
<dbReference type="HOGENOM" id="CLU_009600_0_3_9"/>
<dbReference type="GO" id="GO:0030956">
    <property type="term" value="C:glutamyl-tRNA(Gln) amidotransferase complex"/>
    <property type="evidence" value="ECO:0007669"/>
    <property type="project" value="InterPro"/>
</dbReference>
<dbReference type="GO" id="GO:0005524">
    <property type="term" value="F:ATP binding"/>
    <property type="evidence" value="ECO:0007669"/>
    <property type="project" value="UniProtKB-KW"/>
</dbReference>
<dbReference type="GO" id="GO:0050567">
    <property type="term" value="F:glutaminyl-tRNA synthase (glutamine-hydrolyzing) activity"/>
    <property type="evidence" value="ECO:0007669"/>
    <property type="project" value="UniProtKB-UniRule"/>
</dbReference>
<dbReference type="GO" id="GO:0006412">
    <property type="term" value="P:translation"/>
    <property type="evidence" value="ECO:0007669"/>
    <property type="project" value="UniProtKB-UniRule"/>
</dbReference>
<dbReference type="Gene3D" id="3.90.1300.10">
    <property type="entry name" value="Amidase signature (AS) domain"/>
    <property type="match status" value="1"/>
</dbReference>
<dbReference type="HAMAP" id="MF_00120">
    <property type="entry name" value="GatA"/>
    <property type="match status" value="1"/>
</dbReference>
<dbReference type="InterPro" id="IPR000120">
    <property type="entry name" value="Amidase"/>
</dbReference>
<dbReference type="InterPro" id="IPR020556">
    <property type="entry name" value="Amidase_CS"/>
</dbReference>
<dbReference type="InterPro" id="IPR023631">
    <property type="entry name" value="Amidase_dom"/>
</dbReference>
<dbReference type="InterPro" id="IPR036928">
    <property type="entry name" value="AS_sf"/>
</dbReference>
<dbReference type="InterPro" id="IPR004412">
    <property type="entry name" value="GatA"/>
</dbReference>
<dbReference type="NCBIfam" id="TIGR00132">
    <property type="entry name" value="gatA"/>
    <property type="match status" value="1"/>
</dbReference>
<dbReference type="PANTHER" id="PTHR11895:SF151">
    <property type="entry name" value="GLUTAMYL-TRNA(GLN) AMIDOTRANSFERASE SUBUNIT A"/>
    <property type="match status" value="1"/>
</dbReference>
<dbReference type="PANTHER" id="PTHR11895">
    <property type="entry name" value="TRANSAMIDASE"/>
    <property type="match status" value="1"/>
</dbReference>
<dbReference type="Pfam" id="PF01425">
    <property type="entry name" value="Amidase"/>
    <property type="match status" value="1"/>
</dbReference>
<dbReference type="SUPFAM" id="SSF75304">
    <property type="entry name" value="Amidase signature (AS) enzymes"/>
    <property type="match status" value="1"/>
</dbReference>
<dbReference type="PROSITE" id="PS00571">
    <property type="entry name" value="AMIDASES"/>
    <property type="match status" value="1"/>
</dbReference>